<feature type="chain" id="PRO_0000433583" description="Cytolysin SmT-1">
    <location>
        <begin position="1"/>
        <end position="40" status="greater than"/>
    </location>
</feature>
<feature type="region of interest" description="Plays an important role in the hemolytic activity" evidence="2">
    <location>
        <begin position="3"/>
        <end position="12"/>
    </location>
</feature>
<feature type="region of interest" description="N-terminal region" evidence="3">
    <location>
        <begin position="11"/>
        <end position="30"/>
    </location>
</feature>
<feature type="sequence conflict" description="In Ref. 1; AA sequence." evidence="7" ref="1">
    <location>
        <position position="25"/>
    </location>
</feature>
<feature type="sequence conflict" description="In Ref. 1; AA sequence." evidence="7" ref="1">
    <location>
        <position position="27"/>
    </location>
</feature>
<feature type="non-terminal residue">
    <location>
        <position position="40"/>
    </location>
</feature>
<proteinExistence type="evidence at protein level"/>
<organism>
    <name type="scientific">Stichodactyla mertensii</name>
    <name type="common">Merten's carpet sea anemone</name>
    <dbReference type="NCBI Taxonomy" id="645706"/>
    <lineage>
        <taxon>Eukaryota</taxon>
        <taxon>Metazoa</taxon>
        <taxon>Cnidaria</taxon>
        <taxon>Anthozoa</taxon>
        <taxon>Hexacorallia</taxon>
        <taxon>Actiniaria</taxon>
        <taxon>Stichodactylidae</taxon>
        <taxon>Stichodactyla</taxon>
    </lineage>
</organism>
<comment type="function">
    <text evidence="4 5">Pore-forming protein that forms cations-selective hydrophilic pores of around 1 nm and causes cardiac stimulation and cytolysis. Pore formation is a multi-step process that involves specific recognition of membrane sphingomyelin (but neither cholesterol nor phosphatidylcholine) using aromatic rich region and adjacent phosphocholine (POC) binding site, firm binding to the membrane (mainly driven by hydrophobic interactions) accompanied by the transfer of the N-terminal region to the lipid-water interface and finally pore formation after oligomerization of monomers (By similarity). This toxin shows hemolytic activities (PubMed:10665806).</text>
</comment>
<comment type="subunit">
    <text evidence="1">Octamer or nonamer in membranes. Monomer in the soluble state.</text>
</comment>
<comment type="subcellular location">
    <subcellularLocation>
        <location evidence="1">Secreted</location>
    </subcellularLocation>
    <subcellularLocation>
        <location evidence="2">Nematocyst</location>
    </subcellularLocation>
    <subcellularLocation>
        <location evidence="1">Target cell membrane</location>
    </subcellularLocation>
    <text evidence="1">Forms an alpha-helical membrane channel in the prey.</text>
</comment>
<comment type="domain">
    <text evidence="3">Composed of a long N-terminal alpha-helix and a core region rich in beta-sheet structures. Before the pore formation, the alpha-helix binds the lipid membrane, partitions into the lipid-water interface and stabilizes the monomeric molecule on the membrane. Finally, it traverses the bilayer, thus forming the transmembrane pore.</text>
</comment>
<comment type="similarity">
    <text evidence="7">Belongs to the actinoporin family. Sea anemone subfamily.</text>
</comment>
<comment type="caution">
    <text evidence="8">A second toxin (SmT-2) has been reported which has been sequenced up to residue 24 and only differs by two residues that are missing (see conflict in the feature table).</text>
</comment>
<name>ACTP_STIME</name>
<accession>P0DMX4</accession>
<reference key="1">
    <citation type="journal article" date="2000" name="Toxicon">
        <title>Amino acid sequence studies on cytolytic toxins from sea anemone Heteractis magnifica, Entacmaea quadricolor and Stichodactyla mertensii (Anthozoa).</title>
        <authorList>
            <person name="Samejima Y."/>
            <person name="Yanagisawa M."/>
            <person name="Aoki-Tomomatsu Y."/>
            <person name="Iwasaki E."/>
            <person name="Ando J."/>
            <person name="Mebs D."/>
        </authorList>
    </citation>
    <scope>PROTEIN SEQUENCE</scope>
    <scope>FUNCTION</scope>
</reference>
<reference key="2">
    <citation type="journal article" date="2009" name="Toxicon">
        <title>Molecular mechanism of pore formation by actinoporins.</title>
        <authorList>
            <person name="Kristan K.C."/>
            <person name="Viero G."/>
            <person name="Dalla Serra M."/>
            <person name="Macek P."/>
            <person name="Anderluh G."/>
        </authorList>
    </citation>
    <scope>REVIEW</scope>
</reference>
<protein>
    <recommendedName>
        <fullName evidence="6">Cytolysin SmT-1</fullName>
    </recommendedName>
    <alternativeName>
        <fullName evidence="7">DELTA-stichotoxin</fullName>
    </alternativeName>
    <alternativeName>
        <fullName evidence="6">SmT-2</fullName>
    </alternativeName>
</protein>
<keyword id="KW-0165">Cleavage on pair of basic residues</keyword>
<keyword id="KW-0204">Cytolysis</keyword>
<keyword id="KW-0903">Direct protein sequencing</keyword>
<keyword id="KW-0406">Ion transport</keyword>
<keyword id="KW-0472">Membrane</keyword>
<keyword id="KW-0166">Nematocyst</keyword>
<keyword id="KW-0964">Secreted</keyword>
<keyword id="KW-1052">Target cell membrane</keyword>
<keyword id="KW-1053">Target membrane</keyword>
<keyword id="KW-0800">Toxin</keyword>
<keyword id="KW-0812">Transmembrane</keyword>
<keyword id="KW-0813">Transport</keyword>
<dbReference type="GO" id="GO:0005576">
    <property type="term" value="C:extracellular region"/>
    <property type="evidence" value="ECO:0007669"/>
    <property type="project" value="UniProtKB-SubCell"/>
</dbReference>
<dbReference type="GO" id="GO:0042151">
    <property type="term" value="C:nematocyst"/>
    <property type="evidence" value="ECO:0007669"/>
    <property type="project" value="UniProtKB-SubCell"/>
</dbReference>
<dbReference type="GO" id="GO:0044218">
    <property type="term" value="C:other organism cell membrane"/>
    <property type="evidence" value="ECO:0007669"/>
    <property type="project" value="UniProtKB-KW"/>
</dbReference>
<dbReference type="GO" id="GO:0046930">
    <property type="term" value="C:pore complex"/>
    <property type="evidence" value="ECO:0007669"/>
    <property type="project" value="InterPro"/>
</dbReference>
<dbReference type="GO" id="GO:0015267">
    <property type="term" value="F:channel activity"/>
    <property type="evidence" value="ECO:0007669"/>
    <property type="project" value="InterPro"/>
</dbReference>
<dbReference type="GO" id="GO:0090729">
    <property type="term" value="F:toxin activity"/>
    <property type="evidence" value="ECO:0007669"/>
    <property type="project" value="UniProtKB-KW"/>
</dbReference>
<dbReference type="GO" id="GO:0051715">
    <property type="term" value="P:cytolysis in another organism"/>
    <property type="evidence" value="ECO:0007669"/>
    <property type="project" value="InterPro"/>
</dbReference>
<dbReference type="GO" id="GO:0006812">
    <property type="term" value="P:monoatomic cation transport"/>
    <property type="evidence" value="ECO:0007669"/>
    <property type="project" value="InterPro"/>
</dbReference>
<dbReference type="GO" id="GO:0046931">
    <property type="term" value="P:pore complex assembly"/>
    <property type="evidence" value="ECO:0007669"/>
    <property type="project" value="InterPro"/>
</dbReference>
<dbReference type="Gene3D" id="2.60.270.20">
    <property type="entry name" value="Cytolysin/lectin"/>
    <property type="match status" value="1"/>
</dbReference>
<dbReference type="InterPro" id="IPR009104">
    <property type="entry name" value="Anemon_actinoporin-like"/>
</dbReference>
<dbReference type="InterPro" id="IPR015926">
    <property type="entry name" value="Cytolysin/lectin"/>
</dbReference>
<dbReference type="Pfam" id="PF06369">
    <property type="entry name" value="Anemone_cytotox"/>
    <property type="match status" value="1"/>
</dbReference>
<dbReference type="SUPFAM" id="SSF63724">
    <property type="entry name" value="Cytolysin/lectin"/>
    <property type="match status" value="1"/>
</dbReference>
<evidence type="ECO:0000250" key="1">
    <source>
        <dbReference type="UniProtKB" id="B9W5G6"/>
    </source>
</evidence>
<evidence type="ECO:0000250" key="2">
    <source>
        <dbReference type="UniProtKB" id="P07845"/>
    </source>
</evidence>
<evidence type="ECO:0000250" key="3">
    <source>
        <dbReference type="UniProtKB" id="P61914"/>
    </source>
</evidence>
<evidence type="ECO:0000250" key="4">
    <source>
        <dbReference type="UniProtKB" id="Q9U6X1"/>
    </source>
</evidence>
<evidence type="ECO:0000269" key="5">
    <source>
    </source>
</evidence>
<evidence type="ECO:0000303" key="6">
    <source>
    </source>
</evidence>
<evidence type="ECO:0000305" key="7"/>
<evidence type="ECO:0000305" key="8">
    <source>
    </source>
</evidence>
<sequence>SAALAGTIIAGASLGFQILDKVLGELGKVSRKIAVGVDNE</sequence>